<feature type="chain" id="PRO_0000459395" description="DNA-binding protein RFX7">
    <location>
        <begin position="1"/>
        <end position="1459"/>
    </location>
</feature>
<feature type="DNA-binding region" description="RFX-type winged-helix" evidence="3">
    <location>
        <begin position="108"/>
        <end position="183"/>
    </location>
</feature>
<feature type="region of interest" description="Disordered" evidence="4">
    <location>
        <begin position="1"/>
        <end position="27"/>
    </location>
</feature>
<feature type="region of interest" description="Disordered" evidence="4">
    <location>
        <begin position="303"/>
        <end position="347"/>
    </location>
</feature>
<feature type="region of interest" description="Disordered" evidence="4">
    <location>
        <begin position="404"/>
        <end position="428"/>
    </location>
</feature>
<feature type="region of interest" description="Disordered" evidence="4">
    <location>
        <begin position="482"/>
        <end position="590"/>
    </location>
</feature>
<feature type="region of interest" description="Disordered" evidence="4">
    <location>
        <begin position="634"/>
        <end position="659"/>
    </location>
</feature>
<feature type="region of interest" description="Disordered" evidence="4">
    <location>
        <begin position="688"/>
        <end position="716"/>
    </location>
</feature>
<feature type="region of interest" description="Disordered" evidence="4">
    <location>
        <begin position="918"/>
        <end position="1016"/>
    </location>
</feature>
<feature type="short sequence motif" description="PxLPxI/L motif; mediates interaction with ANKRA2 and RFXANK" evidence="2">
    <location>
        <begin position="188"/>
        <end position="193"/>
    </location>
</feature>
<feature type="compositionally biased region" description="Low complexity" evidence="4">
    <location>
        <begin position="12"/>
        <end position="21"/>
    </location>
</feature>
<feature type="compositionally biased region" description="Polar residues" evidence="4">
    <location>
        <begin position="404"/>
        <end position="416"/>
    </location>
</feature>
<feature type="compositionally biased region" description="Polar residues" evidence="4">
    <location>
        <begin position="482"/>
        <end position="502"/>
    </location>
</feature>
<feature type="compositionally biased region" description="Low complexity" evidence="4">
    <location>
        <begin position="521"/>
        <end position="534"/>
    </location>
</feature>
<feature type="compositionally biased region" description="Basic and acidic residues" evidence="4">
    <location>
        <begin position="537"/>
        <end position="549"/>
    </location>
</feature>
<feature type="compositionally biased region" description="Polar residues" evidence="4">
    <location>
        <begin position="562"/>
        <end position="578"/>
    </location>
</feature>
<feature type="compositionally biased region" description="Polar residues" evidence="4">
    <location>
        <begin position="634"/>
        <end position="645"/>
    </location>
</feature>
<feature type="compositionally biased region" description="Polar residues" evidence="4">
    <location>
        <begin position="706"/>
        <end position="716"/>
    </location>
</feature>
<feature type="compositionally biased region" description="Pro residues" evidence="4">
    <location>
        <begin position="947"/>
        <end position="963"/>
    </location>
</feature>
<feature type="compositionally biased region" description="Polar residues" evidence="4">
    <location>
        <begin position="971"/>
        <end position="1009"/>
    </location>
</feature>
<feature type="mutagenesis site" description="Loss of nuclear localization." evidence="5">
    <original>R</original>
    <variation>A</variation>
    <location>
        <position position="658"/>
    </location>
</feature>
<feature type="mutagenesis site" description="Loss of nuclear localization." evidence="5">
    <original>K</original>
    <variation>A</variation>
    <location>
        <position position="674"/>
    </location>
</feature>
<feature type="mutagenesis site" description="No impact on nuclear localization." evidence="5">
    <original>K</original>
    <variation>A</variation>
    <location>
        <position position="695"/>
    </location>
</feature>
<dbReference type="CCDS" id="CCDS40686.1"/>
<dbReference type="RefSeq" id="NP_001028708.1">
    <property type="nucleotide sequence ID" value="NM_001033536.1"/>
</dbReference>
<dbReference type="RefSeq" id="XP_006511286.1">
    <property type="nucleotide sequence ID" value="XM_006511223.5"/>
</dbReference>
<dbReference type="RefSeq" id="XP_011241056.1">
    <property type="nucleotide sequence ID" value="XM_011242754.4"/>
</dbReference>
<dbReference type="SMR" id="F8VPJ6"/>
<dbReference type="FunCoup" id="F8VPJ6">
    <property type="interactions" value="2969"/>
</dbReference>
<dbReference type="STRING" id="10090.ENSMUSP00000127192"/>
<dbReference type="GlyGen" id="F8VPJ6">
    <property type="glycosylation" value="8 sites"/>
</dbReference>
<dbReference type="iPTMnet" id="F8VPJ6"/>
<dbReference type="PhosphoSitePlus" id="F8VPJ6"/>
<dbReference type="jPOST" id="F8VPJ6"/>
<dbReference type="PaxDb" id="10090-ENSMUSP00000127192"/>
<dbReference type="PeptideAtlas" id="F8VPJ6"/>
<dbReference type="ProteomicsDB" id="343353"/>
<dbReference type="Antibodypedia" id="25133">
    <property type="antibodies" value="54 antibodies from 10 providers"/>
</dbReference>
<dbReference type="DNASU" id="319758"/>
<dbReference type="Ensembl" id="ENSMUST00000163401.9">
    <property type="protein sequence ID" value="ENSMUSP00000127192.2"/>
    <property type="gene ID" value="ENSMUSG00000037674.17"/>
</dbReference>
<dbReference type="GeneID" id="319758"/>
<dbReference type="KEGG" id="mmu:319758"/>
<dbReference type="UCSC" id="uc009qqb.1">
    <property type="organism name" value="mouse"/>
</dbReference>
<dbReference type="AGR" id="MGI:2442675"/>
<dbReference type="CTD" id="64864"/>
<dbReference type="MGI" id="MGI:2442675">
    <property type="gene designation" value="Rfx7"/>
</dbReference>
<dbReference type="VEuPathDB" id="HostDB:ENSMUSG00000037674"/>
<dbReference type="eggNOG" id="KOG3712">
    <property type="taxonomic scope" value="Eukaryota"/>
</dbReference>
<dbReference type="GeneTree" id="ENSGT01050000244970"/>
<dbReference type="HOGENOM" id="CLU_252972_0_0_1"/>
<dbReference type="OMA" id="QCQENPD"/>
<dbReference type="OrthoDB" id="10069709at2759"/>
<dbReference type="TreeFam" id="TF321340"/>
<dbReference type="BioGRID-ORCS" id="319758">
    <property type="hits" value="4 hits in 81 CRISPR screens"/>
</dbReference>
<dbReference type="ChiTaRS" id="Rfx7">
    <property type="organism name" value="mouse"/>
</dbReference>
<dbReference type="PRO" id="PR:F8VPJ6"/>
<dbReference type="Proteomes" id="UP000000589">
    <property type="component" value="Chromosome 9"/>
</dbReference>
<dbReference type="RNAct" id="F8VPJ6">
    <property type="molecule type" value="protein"/>
</dbReference>
<dbReference type="Bgee" id="ENSMUSG00000037674">
    <property type="expression patterns" value="Expressed in manus and 244 other cell types or tissues"/>
</dbReference>
<dbReference type="ExpressionAtlas" id="F8VPJ6">
    <property type="expression patterns" value="baseline and differential"/>
</dbReference>
<dbReference type="GO" id="GO:0005634">
    <property type="term" value="C:nucleus"/>
    <property type="evidence" value="ECO:0000314"/>
    <property type="project" value="UniProtKB"/>
</dbReference>
<dbReference type="GO" id="GO:0003700">
    <property type="term" value="F:DNA-binding transcription factor activity"/>
    <property type="evidence" value="ECO:0007669"/>
    <property type="project" value="InterPro"/>
</dbReference>
<dbReference type="GO" id="GO:0000979">
    <property type="term" value="F:RNA polymerase II core promoter sequence-specific DNA binding"/>
    <property type="evidence" value="ECO:0000314"/>
    <property type="project" value="UniProtKB"/>
</dbReference>
<dbReference type="GO" id="GO:0045893">
    <property type="term" value="P:positive regulation of DNA-templated transcription"/>
    <property type="evidence" value="ECO:0000314"/>
    <property type="project" value="UniProtKB"/>
</dbReference>
<dbReference type="GO" id="GO:0045944">
    <property type="term" value="P:positive regulation of transcription by RNA polymerase II"/>
    <property type="evidence" value="ECO:0007669"/>
    <property type="project" value="Ensembl"/>
</dbReference>
<dbReference type="FunFam" id="1.10.10.10:FF:000128">
    <property type="entry name" value="DNA-binding protein RFX5 isoform X1"/>
    <property type="match status" value="1"/>
</dbReference>
<dbReference type="Gene3D" id="6.10.140.1290">
    <property type="match status" value="1"/>
</dbReference>
<dbReference type="Gene3D" id="1.10.10.10">
    <property type="entry name" value="Winged helix-like DNA-binding domain superfamily/Winged helix DNA-binding domain"/>
    <property type="match status" value="1"/>
</dbReference>
<dbReference type="InterPro" id="IPR003150">
    <property type="entry name" value="DNA-bd_RFX"/>
</dbReference>
<dbReference type="InterPro" id="IPR039779">
    <property type="entry name" value="RFX-like"/>
</dbReference>
<dbReference type="InterPro" id="IPR036388">
    <property type="entry name" value="WH-like_DNA-bd_sf"/>
</dbReference>
<dbReference type="InterPro" id="IPR036390">
    <property type="entry name" value="WH_DNA-bd_sf"/>
</dbReference>
<dbReference type="PANTHER" id="PTHR12619:SF2">
    <property type="entry name" value="DNA-BINDING PROTEIN RFX7"/>
    <property type="match status" value="1"/>
</dbReference>
<dbReference type="PANTHER" id="PTHR12619">
    <property type="entry name" value="RFX TRANSCRIPTION FACTOR FAMILY"/>
    <property type="match status" value="1"/>
</dbReference>
<dbReference type="Pfam" id="PF18326">
    <property type="entry name" value="RFX5_N"/>
    <property type="match status" value="1"/>
</dbReference>
<dbReference type="Pfam" id="PF02257">
    <property type="entry name" value="RFX_DNA_binding"/>
    <property type="match status" value="1"/>
</dbReference>
<dbReference type="SUPFAM" id="SSF46785">
    <property type="entry name" value="Winged helix' DNA-binding domain"/>
    <property type="match status" value="1"/>
</dbReference>
<dbReference type="PROSITE" id="PS51526">
    <property type="entry name" value="RFX_DBD"/>
    <property type="match status" value="1"/>
</dbReference>
<comment type="function">
    <text evidence="1 5">Transcription factor (PubMed:29967452). Acts as a transcriptional activator by binding to promoter regions of target genes, such as Rec8, Mxd4 and Ddit4 (PubMed:29967452). Plays a role in natural killer (NK) cell maintenance and immunity (PubMed:29967452). May play a role in the process of ciliogenesis in the neural tube and neural tube closure (By similarity).</text>
</comment>
<comment type="subunit">
    <text evidence="2">Interacts (via PxLPxI/L motif) with RFXANK (via ankyrin repeats) (By similarity). Interacts (via PxLPxI/L motif) with ANKRA2 (via ankyrin repeats) (By similarity).</text>
</comment>
<comment type="subcellular location">
    <subcellularLocation>
        <location evidence="5">Nucleus</location>
    </subcellularLocation>
</comment>
<comment type="tissue specificity">
    <text evidence="5">Expressed in spleen and lymph node and to a lower extend in brain (at protein level) (PubMed:29967452). Expressed in lymphoid organs and lymphoid cell subsets (PubMed:29967452). Expressed throughout natural killer (NK) cell maturation (PubMed:29967452).</text>
</comment>
<comment type="disruption phenotype">
    <text evidence="5">Knockout mice exhibit embryonic lethality with a frequency of 7% instead of the expected 25% pups being born from heterozygous parents, revealing a role in development (PubMed:29967452). Natural killer (NK) lymphocytes exhibit increased size, granularity, proliferation and energetic state (PubMed:29967452). Altered gene expression of genes linked to cell metabolism in NK cells (PubMed:29967452).</text>
</comment>
<comment type="similarity">
    <text evidence="6">Belongs to the RFX family.</text>
</comment>
<accession>F8VPJ6</accession>
<evidence type="ECO:0000250" key="1">
    <source>
        <dbReference type="UniProtKB" id="A0A1L8H0H2"/>
    </source>
</evidence>
<evidence type="ECO:0000250" key="2">
    <source>
        <dbReference type="UniProtKB" id="Q2KHR2"/>
    </source>
</evidence>
<evidence type="ECO:0000255" key="3">
    <source>
        <dbReference type="PROSITE-ProRule" id="PRU00858"/>
    </source>
</evidence>
<evidence type="ECO:0000256" key="4">
    <source>
        <dbReference type="SAM" id="MobiDB-lite"/>
    </source>
</evidence>
<evidence type="ECO:0000269" key="5">
    <source>
    </source>
</evidence>
<evidence type="ECO:0000305" key="6"/>
<evidence type="ECO:0000312" key="7">
    <source>
        <dbReference type="MGI" id="MGI:2442675"/>
    </source>
</evidence>
<evidence type="ECO:0000312" key="8">
    <source>
        <dbReference type="Proteomes" id="UP000000589"/>
    </source>
</evidence>
<evidence type="ECO:0007744" key="9">
    <source>
    </source>
</evidence>
<keyword id="KW-0238">DNA-binding</keyword>
<keyword id="KW-0539">Nucleus</keyword>
<keyword id="KW-1185">Reference proteome</keyword>
<keyword id="KW-0804">Transcription</keyword>
<keyword id="KW-0805">Transcription regulation</keyword>
<protein>
    <recommendedName>
        <fullName evidence="6">DNA-binding protein RFX7</fullName>
    </recommendedName>
    <alternativeName>
        <fullName evidence="6">Regulatory factor X 7</fullName>
    </alternativeName>
</protein>
<organism evidence="8">
    <name type="scientific">Mus musculus</name>
    <name type="common">Mouse</name>
    <dbReference type="NCBI Taxonomy" id="10090"/>
    <lineage>
        <taxon>Eukaryota</taxon>
        <taxon>Metazoa</taxon>
        <taxon>Chordata</taxon>
        <taxon>Craniata</taxon>
        <taxon>Vertebrata</taxon>
        <taxon>Euteleostomi</taxon>
        <taxon>Mammalia</taxon>
        <taxon>Eutheria</taxon>
        <taxon>Euarchontoglires</taxon>
        <taxon>Glires</taxon>
        <taxon>Rodentia</taxon>
        <taxon>Myomorpha</taxon>
        <taxon>Muroidea</taxon>
        <taxon>Muridae</taxon>
        <taxon>Murinae</taxon>
        <taxon>Mus</taxon>
        <taxon>Mus</taxon>
    </lineage>
</organism>
<proteinExistence type="evidence at protein level"/>
<name>RFX7_MOUSE</name>
<gene>
    <name evidence="7" type="primary">Rfx7</name>
</gene>
<sequence length="1459" mass="157638">MAEEQQQPPPQQLDAPQQLPLSAPNPGVALPALVPGLPGTEANALQHKIKNSICKTVQSKVDCILQEVEKFTDLEKLYLYLQLPSGLSSAEKSDQNAMSSSRAQQMHAFSWIRNTLEEHPETSLPKQEVYDEYKSYCDNLGYHPLSAADFGKIMKNVFPNMKARRLGTRGKSKYCYSGLRKKAFVHMPTLPNLDFHKTGDGLEGVEPSGQLQNIDEEVISSACRLVCEWAQKVLSQPFDTVLELAHFLVKSHYIGTKSMAALTVMAAAPAGLKGIPQPSAFIPTAESNSFQPQVKTLPSPIDAKQQLQRKIQKKQQEQKLQSPLPGESSAKKPEGTTANGVANLPNGNPAILSPQPIGIVVAAVPSPIPVQRTRQLVTSPSPMNSPDGKVLPLNVQVVTQHMQSVKQTPKTPQNVPASPGGDRSARHRYPQILPKPANTSALTIRSPTTVLFTSSPIKTAVVPASHMSSLNVVKMTTISLTPSNSNAPLKHSASVSSATGTTEESRIVPQIKNGSVVSLQSPGSRASSTGGTSAVEVKMEPEGSSDEHPLQCQENSEETKAPLTTSSALWGQKSNTDGTVPKPSNEGVTEVKTTKVCDQRTKCKNRCNEILSGISAGNNQSTVTLSVATQNLPFTSTSSPSNGDSVNKDPKICTKSPRKRLSATLQESQVPPVKKPIVEQLSAVTIEGQKPGTVKKDQKVPHSGKTESSTAGAQIPNKVSISVSSQIIEDQPVNPALVTSEPVLEQQTTPSSSPDVKVKLEGSVFLLDRESKSDGSFNRNEWQQVTKDSDFIAASCEHQQDISVMTIAEHPDIHDLEKSVWELEGMPQDTYSQQLHSQIPESSLNEIQAQSSDQLPLQSELKEFESSVSQTNESYFPFDDELTQDSIVEELVLMEQQMSMNNSHSYGNCLGMSLQNQSVTPGAPMSSHASSTHFYHPIHSNGTPIHTPTPTPTPTPTPTPTPTPTSEMIAGSQSLSRESPCSRLAQTTPVDSALGSSRHTPIGTPHSNCSSSVPPSPVECRNPFAFTPISSSMAYHDASIVSSSPVKPMQRPMATHPDKTKLEWMNNGYGGVGNSSVSGHGILPSYQELVEDRFRKPHAFAVPGQSYQSQSRHHDTHFGRLTPVSPVQHQGATVNTNKQEGFAVPAPLDNKGTNSSAGSNFRCRSVSPAVHRQRNLSGSTLYPVSNIPRSNVTPFGSPVTPEVHVFTNVHTDACANNIAQRSQSVPLTVMMQTAFPNALQKQTNSKKITNVLLSKLDSDNDDSVRGLGINNVPSNYTARMNLTQILETSPVFPSANSQNMIDSSTSVYEFQTPSYLTKSNSTDQISFSPGDNQAQSEIGEQQLDFNSTVKDLLSGDNLQTSQQLVGQVASDLTNTASDFSSDIRLSSDLSGSINDLNTLDPNLLFDPGRQQGQDDEATLEELKNDPLFQQICSESMNSMTSSGFEWIESKDHPTVEMLG</sequence>
<reference evidence="8" key="1">
    <citation type="journal article" date="2009" name="PLoS Biol.">
        <title>Lineage-specific biology revealed by a finished genome assembly of the mouse.</title>
        <authorList>
            <person name="Church D.M."/>
            <person name="Goodstadt L."/>
            <person name="Hillier L.W."/>
            <person name="Zody M.C."/>
            <person name="Goldstein S."/>
            <person name="She X."/>
            <person name="Bult C.J."/>
            <person name="Agarwala R."/>
            <person name="Cherry J.L."/>
            <person name="DiCuccio M."/>
            <person name="Hlavina W."/>
            <person name="Kapustin Y."/>
            <person name="Meric P."/>
            <person name="Maglott D."/>
            <person name="Birtle Z."/>
            <person name="Marques A.C."/>
            <person name="Graves T."/>
            <person name="Zhou S."/>
            <person name="Teague B."/>
            <person name="Potamousis K."/>
            <person name="Churas C."/>
            <person name="Place M."/>
            <person name="Herschleb J."/>
            <person name="Runnheim R."/>
            <person name="Forrest D."/>
            <person name="Amos-Landgraf J."/>
            <person name="Schwartz D.C."/>
            <person name="Cheng Z."/>
            <person name="Lindblad-Toh K."/>
            <person name="Eichler E.E."/>
            <person name="Ponting C.P."/>
        </authorList>
    </citation>
    <scope>NUCLEOTIDE SEQUENCE [LARGE SCALE GENOMIC DNA]</scope>
    <source>
        <strain evidence="8">C57BL/6J</strain>
    </source>
</reference>
<reference evidence="9" key="2">
    <citation type="journal article" date="2010" name="Cell">
        <title>A tissue-specific atlas of mouse protein phosphorylation and expression.</title>
        <authorList>
            <person name="Huttlin E.L."/>
            <person name="Jedrychowski M.P."/>
            <person name="Elias J.E."/>
            <person name="Goswami T."/>
            <person name="Rad R."/>
            <person name="Beausoleil S.A."/>
            <person name="Villen J."/>
            <person name="Haas W."/>
            <person name="Sowa M.E."/>
            <person name="Gygi S.P."/>
        </authorList>
    </citation>
    <scope>IDENTIFICATION BY MASS SPECTROMETRY [LARGE SCALE ANALYSIS]</scope>
</reference>
<reference evidence="6" key="3">
    <citation type="journal article" date="2018" name="Nat. Immunol.">
        <title>The transcription factor Rfx7 limits metabolism of NK cells and promotes their maintenance and immunity.</title>
        <authorList>
            <person name="Castro W."/>
            <person name="Chelbi S.T."/>
            <person name="Niogret C."/>
            <person name="Ramon-Barros C."/>
            <person name="Welten S.P.M."/>
            <person name="Osterheld K."/>
            <person name="Wang H."/>
            <person name="Rota G."/>
            <person name="Morgado L."/>
            <person name="Vivier E."/>
            <person name="Raeber M.E."/>
            <person name="Boyman O."/>
            <person name="Delorenzi M."/>
            <person name="Barras D."/>
            <person name="Ho P.C."/>
            <person name="Oxenius A."/>
            <person name="Guarda G."/>
        </authorList>
    </citation>
    <scope>FUNCTION</scope>
    <scope>SUBCELLULAR LOCATION</scope>
    <scope>TISSUE SPECIFICITY</scope>
    <scope>DISRUPTION PHENOTYPE</scope>
    <scope>MUTAGENESIS OF ARG-658; LYS-674 AND LYS-695</scope>
</reference>